<organism>
    <name type="scientific">Escherichia coli (strain K12)</name>
    <dbReference type="NCBI Taxonomy" id="83333"/>
    <lineage>
        <taxon>Bacteria</taxon>
        <taxon>Pseudomonadati</taxon>
        <taxon>Pseudomonadota</taxon>
        <taxon>Gammaproteobacteria</taxon>
        <taxon>Enterobacterales</taxon>
        <taxon>Enterobacteriaceae</taxon>
        <taxon>Escherichia</taxon>
    </lineage>
</organism>
<keyword id="KW-1185">Reference proteome</keyword>
<evidence type="ECO:0000305" key="1"/>
<gene>
    <name type="primary">yahH</name>
    <name type="ordered locus">b0322</name>
    <name type="ordered locus">JW5893</name>
</gene>
<feature type="chain" id="PRO_0000252168" description="Putative uncharacterized protein YahH">
    <location>
        <begin position="1"/>
        <end position="106"/>
    </location>
</feature>
<protein>
    <recommendedName>
        <fullName>Putative uncharacterized protein YahH</fullName>
    </recommendedName>
</protein>
<comment type="caution">
    <text evidence="1">Could be the product of a pseudogene. Seems to be an unlikely translation of a REP element.</text>
</comment>
<comment type="sequence caution" evidence="1">
    <conflict type="erroneous initiation">
        <sequence resource="EMBL-CDS" id="BAE76105"/>
    </conflict>
    <text>Truncated N-terminus.</text>
</comment>
<proteinExistence type="uncertain"/>
<name>YAHH_ECOLI</name>
<reference key="1">
    <citation type="journal article" date="1997" name="Science">
        <title>The complete genome sequence of Escherichia coli K-12.</title>
        <authorList>
            <person name="Blattner F.R."/>
            <person name="Plunkett G. III"/>
            <person name="Bloch C.A."/>
            <person name="Perna N.T."/>
            <person name="Burland V."/>
            <person name="Riley M."/>
            <person name="Collado-Vides J."/>
            <person name="Glasner J.D."/>
            <person name="Rode C.K."/>
            <person name="Mayhew G.F."/>
            <person name="Gregor J."/>
            <person name="Davis N.W."/>
            <person name="Kirkpatrick H.A."/>
            <person name="Goeden M.A."/>
            <person name="Rose D.J."/>
            <person name="Mau B."/>
            <person name="Shao Y."/>
        </authorList>
    </citation>
    <scope>NUCLEOTIDE SEQUENCE [LARGE SCALE GENOMIC DNA]</scope>
    <source>
        <strain>K12 / MG1655 / ATCC 47076</strain>
    </source>
</reference>
<reference key="2">
    <citation type="journal article" date="2006" name="Mol. Syst. Biol.">
        <title>Highly accurate genome sequences of Escherichia coli K-12 strains MG1655 and W3110.</title>
        <authorList>
            <person name="Hayashi K."/>
            <person name="Morooka N."/>
            <person name="Yamamoto Y."/>
            <person name="Fujita K."/>
            <person name="Isono K."/>
            <person name="Choi S."/>
            <person name="Ohtsubo E."/>
            <person name="Baba T."/>
            <person name="Wanner B.L."/>
            <person name="Mori H."/>
            <person name="Horiuchi T."/>
        </authorList>
    </citation>
    <scope>NUCLEOTIDE SEQUENCE [LARGE SCALE GENOMIC DNA]</scope>
    <source>
        <strain>K12 / W3110 / ATCC 27325 / DSM 5911</strain>
    </source>
</reference>
<accession>Q2EEQ3</accession>
<accession>A0A385XJA4</accession>
<accession>Q2MCA1</accession>
<dbReference type="EMBL" id="U00096">
    <property type="protein sequence ID" value="AYC08176.2"/>
    <property type="molecule type" value="Genomic_DNA"/>
</dbReference>
<dbReference type="EMBL" id="AP009048">
    <property type="protein sequence ID" value="BAE76105.1"/>
    <property type="status" value="ALT_INIT"/>
    <property type="molecule type" value="Genomic_DNA"/>
</dbReference>
<dbReference type="RefSeq" id="WP_001360107.1">
    <property type="nucleotide sequence ID" value="NZ_SSZJ01000072.1"/>
</dbReference>
<dbReference type="BioGRID" id="4262165">
    <property type="interactions" value="8"/>
</dbReference>
<dbReference type="FunCoup" id="Q2EEQ3">
    <property type="interactions" value="22"/>
</dbReference>
<dbReference type="EnsemblBacteria" id="AYC08176">
    <property type="protein sequence ID" value="AYC08176"/>
    <property type="gene ID" value="b0322"/>
</dbReference>
<dbReference type="KEGG" id="ecj:JW5893"/>
<dbReference type="eggNOG" id="ENOG5031KUU">
    <property type="taxonomic scope" value="Bacteria"/>
</dbReference>
<dbReference type="HOGENOM" id="CLU_144699_0_0_6"/>
<dbReference type="InParanoid" id="Q2EEQ3"/>
<dbReference type="BioCyc" id="EcoCyc:MONOMER0-2772"/>
<dbReference type="Proteomes" id="UP000000625">
    <property type="component" value="Chromosome"/>
</dbReference>
<dbReference type="AntiFam" id="ANF00065">
    <property type="entry name" value="Translation of REP sequence"/>
</dbReference>
<sequence length="106" mass="10634">MNALSGLRMAQESVGLISVAHQAFVTIAGCGVNALSGLRMAQESVGLISVAHQAFATTAGCGVDALSGLRVARESVGLISVAHQAFVTIAGCGVNALSGLRVAREL</sequence>